<dbReference type="EC" id="3.1.6.1"/>
<dbReference type="EMBL" id="BA000016">
    <property type="protein sequence ID" value="BAB79937.1"/>
    <property type="molecule type" value="Genomic_DNA"/>
</dbReference>
<dbReference type="RefSeq" id="WP_011009688.1">
    <property type="nucleotide sequence ID" value="NC_003366.1"/>
</dbReference>
<dbReference type="SMR" id="Q8XNV1"/>
<dbReference type="STRING" id="195102.gene:10489479"/>
<dbReference type="KEGG" id="cpe:CPE0231"/>
<dbReference type="HOGENOM" id="CLU_006332_9_2_9"/>
<dbReference type="Proteomes" id="UP000000818">
    <property type="component" value="Chromosome"/>
</dbReference>
<dbReference type="GO" id="GO:0005737">
    <property type="term" value="C:cytoplasm"/>
    <property type="evidence" value="ECO:0007669"/>
    <property type="project" value="TreeGrafter"/>
</dbReference>
<dbReference type="GO" id="GO:0004065">
    <property type="term" value="F:arylsulfatase activity"/>
    <property type="evidence" value="ECO:0007669"/>
    <property type="project" value="UniProtKB-EC"/>
</dbReference>
<dbReference type="GO" id="GO:0046872">
    <property type="term" value="F:metal ion binding"/>
    <property type="evidence" value="ECO:0007669"/>
    <property type="project" value="UniProtKB-KW"/>
</dbReference>
<dbReference type="CDD" id="cd16022">
    <property type="entry name" value="sulfatase_like"/>
    <property type="match status" value="1"/>
</dbReference>
<dbReference type="Gene3D" id="3.40.720.10">
    <property type="entry name" value="Alkaline Phosphatase, subunit A"/>
    <property type="match status" value="1"/>
</dbReference>
<dbReference type="InterPro" id="IPR017850">
    <property type="entry name" value="Alkaline_phosphatase_core_sf"/>
</dbReference>
<dbReference type="InterPro" id="IPR024607">
    <property type="entry name" value="Sulfatase_CS"/>
</dbReference>
<dbReference type="InterPro" id="IPR000917">
    <property type="entry name" value="Sulfatase_N"/>
</dbReference>
<dbReference type="NCBIfam" id="NF010322">
    <property type="entry name" value="PRK13759.1"/>
    <property type="match status" value="1"/>
</dbReference>
<dbReference type="PANTHER" id="PTHR45953">
    <property type="entry name" value="IDURONATE 2-SULFATASE"/>
    <property type="match status" value="1"/>
</dbReference>
<dbReference type="PANTHER" id="PTHR45953:SF1">
    <property type="entry name" value="IDURONATE 2-SULFATASE"/>
    <property type="match status" value="1"/>
</dbReference>
<dbReference type="Pfam" id="PF00884">
    <property type="entry name" value="Sulfatase"/>
    <property type="match status" value="1"/>
</dbReference>
<dbReference type="SUPFAM" id="SSF53649">
    <property type="entry name" value="Alkaline phosphatase-like"/>
    <property type="match status" value="1"/>
</dbReference>
<dbReference type="PROSITE" id="PS00149">
    <property type="entry name" value="SULFATASE_2"/>
    <property type="match status" value="1"/>
</dbReference>
<comment type="function">
    <text evidence="1">Has sulfatase activity toward para-nitrophenyl sulfate, which is increased in presence of calcium ion.</text>
</comment>
<comment type="catalytic activity">
    <reaction>
        <text>an aryl sulfate + H2O = a phenol + sulfate + H(+)</text>
        <dbReference type="Rhea" id="RHEA:17261"/>
        <dbReference type="ChEBI" id="CHEBI:15377"/>
        <dbReference type="ChEBI" id="CHEBI:15378"/>
        <dbReference type="ChEBI" id="CHEBI:16189"/>
        <dbReference type="ChEBI" id="CHEBI:33853"/>
        <dbReference type="ChEBI" id="CHEBI:140317"/>
        <dbReference type="EC" id="3.1.6.1"/>
    </reaction>
</comment>
<comment type="cofactor">
    <cofactor evidence="1">
        <name>Ca(2+)</name>
        <dbReference type="ChEBI" id="CHEBI:29108"/>
    </cofactor>
    <text evidence="1">Binds 1 Ca(2+) ion per subunit.</text>
</comment>
<comment type="PTM">
    <text evidence="1">The conversion to 3-oxoalanine (also known as C-formylglycine, FGly), of a serine or cysteine residue in prokaryotes and of a cysteine residue in eukaryotes, is critical for catalytic activity.</text>
</comment>
<comment type="similarity">
    <text evidence="4">Belongs to the sulfatase family.</text>
</comment>
<accession>Q8XNV1</accession>
<name>SULF_CLOPE</name>
<feature type="chain" id="PRO_0000273187" description="Arylsulfatase">
    <location>
        <begin position="1"/>
        <end position="481"/>
    </location>
</feature>
<feature type="active site" description="Nucleophile" evidence="3">
    <location>
        <position position="51"/>
    </location>
</feature>
<feature type="active site" evidence="2">
    <location>
        <position position="102"/>
    </location>
</feature>
<feature type="binding site" evidence="1">
    <location>
        <position position="11"/>
    </location>
    <ligand>
        <name>Ca(2+)</name>
        <dbReference type="ChEBI" id="CHEBI:29108"/>
    </ligand>
</feature>
<feature type="binding site" evidence="1">
    <location>
        <position position="12"/>
    </location>
    <ligand>
        <name>Ca(2+)</name>
        <dbReference type="ChEBI" id="CHEBI:29108"/>
    </ligand>
</feature>
<feature type="binding site" description="via 3-oxoalanine" evidence="1">
    <location>
        <position position="51"/>
    </location>
    <ligand>
        <name>Ca(2+)</name>
        <dbReference type="ChEBI" id="CHEBI:29108"/>
    </ligand>
</feature>
<feature type="binding site" evidence="1">
    <location>
        <position position="302"/>
    </location>
    <ligand>
        <name>Ca(2+)</name>
        <dbReference type="ChEBI" id="CHEBI:29108"/>
    </ligand>
</feature>
<feature type="binding site" evidence="1">
    <location>
        <position position="303"/>
    </location>
    <ligand>
        <name>Ca(2+)</name>
        <dbReference type="ChEBI" id="CHEBI:29108"/>
    </ligand>
</feature>
<feature type="modified residue" description="3-oxoalanine (Cys)" evidence="3">
    <location>
        <position position="51"/>
    </location>
</feature>
<proteinExistence type="inferred from homology"/>
<keyword id="KW-0106">Calcium</keyword>
<keyword id="KW-0378">Hydrolase</keyword>
<keyword id="KW-0479">Metal-binding</keyword>
<keyword id="KW-1185">Reference proteome</keyword>
<sequence length="481" mass="55796">MKPNIVLIMVDQMRGDCLGVNGNEFIETPNLDMMATEGYNFENAYTAVPSCIASRASILTGMSQKSHGRVGYEDGVSWNYENTIASEFSKAGYHTQCIGKMHVYPERNLCGFHNIMLHDGYLHFARNKEGKASTQIEQCDDYLKWFREKKGHNVDLIDIGLDCNSWVSRPWGYEENLHPTNWVVNESIDFLRRRDPSKPFFLKMSFVRPHSPLDPPKFYFDMYKDEDLPEPLMGDWANKEDEENRGKDINCVKGIINKKALKRAKAAYYGSITHIDHQIGRFLIALSEYGKLNNTIFLFVSDHGDMMGDHNWFRKGIPYEGSARVPFFIYDPGNLLKGKKGKVFDEVLELRDIMPTLLDFAHISIPDSVEGLSLKDLIEERNSTWRDYIHGEHSFGEDSNHYIVTKKDKFLWFSQRGEEQYFDLEKDPKELTNLINSEEYKERIDYLRKILIKELEGREEGYTDGNKLLKGYPVSTLKHIR</sequence>
<gene>
    <name type="ordered locus">CPE0231</name>
</gene>
<organism>
    <name type="scientific">Clostridium perfringens (strain 13 / Type A)</name>
    <dbReference type="NCBI Taxonomy" id="195102"/>
    <lineage>
        <taxon>Bacteria</taxon>
        <taxon>Bacillati</taxon>
        <taxon>Bacillota</taxon>
        <taxon>Clostridia</taxon>
        <taxon>Eubacteriales</taxon>
        <taxon>Clostridiaceae</taxon>
        <taxon>Clostridium</taxon>
    </lineage>
</organism>
<reference key="1">
    <citation type="journal article" date="2002" name="Proc. Natl. Acad. Sci. U.S.A.">
        <title>Complete genome sequence of Clostridium perfringens, an anaerobic flesh-eater.</title>
        <authorList>
            <person name="Shimizu T."/>
            <person name="Ohtani K."/>
            <person name="Hirakawa H."/>
            <person name="Ohshima K."/>
            <person name="Yamashita A."/>
            <person name="Shiba T."/>
            <person name="Ogasawara N."/>
            <person name="Hattori M."/>
            <person name="Kuhara S."/>
            <person name="Hayashi H."/>
        </authorList>
    </citation>
    <scope>NUCLEOTIDE SEQUENCE [LARGE SCALE GENOMIC DNA]</scope>
    <source>
        <strain>13 / Type A</strain>
    </source>
</reference>
<evidence type="ECO:0000250" key="1"/>
<evidence type="ECO:0000250" key="2">
    <source>
        <dbReference type="UniProtKB" id="P15289"/>
    </source>
</evidence>
<evidence type="ECO:0000250" key="3">
    <source>
        <dbReference type="UniProtKB" id="Q0TUK6"/>
    </source>
</evidence>
<evidence type="ECO:0000305" key="4"/>
<protein>
    <recommendedName>
        <fullName>Arylsulfatase</fullName>
        <ecNumber>3.1.6.1</ecNumber>
    </recommendedName>
    <alternativeName>
        <fullName>Cys-type sulfatase</fullName>
    </alternativeName>
</protein>